<proteinExistence type="inferred from homology"/>
<evidence type="ECO:0000255" key="1">
    <source>
        <dbReference type="HAMAP-Rule" id="MF_00381"/>
    </source>
</evidence>
<name>IHFB_ECOBW</name>
<gene>
    <name evidence="1" type="primary">ihfB</name>
    <name evidence="1" type="synonym">himD</name>
    <name type="ordered locus">BWG_0764</name>
</gene>
<feature type="chain" id="PRO_1000205695" description="Integration host factor subunit beta">
    <location>
        <begin position="1"/>
        <end position="94"/>
    </location>
</feature>
<sequence>MTKSELIERLATQQSHIPAKTVEDAVKEMLEHMASTLAQGERIEIRGFGSFSLHYRAPRTGRNPKTGDKVELEGKYVPHFKPGKELRDRANIYG</sequence>
<reference key="1">
    <citation type="journal article" date="2009" name="J. Bacteriol.">
        <title>Genomic sequencing reveals regulatory mutations and recombinational events in the widely used MC4100 lineage of Escherichia coli K-12.</title>
        <authorList>
            <person name="Ferenci T."/>
            <person name="Zhou Z."/>
            <person name="Betteridge T."/>
            <person name="Ren Y."/>
            <person name="Liu Y."/>
            <person name="Feng L."/>
            <person name="Reeves P.R."/>
            <person name="Wang L."/>
        </authorList>
    </citation>
    <scope>NUCLEOTIDE SEQUENCE [LARGE SCALE GENOMIC DNA]</scope>
    <source>
        <strain>K12 / MC4100 / BW2952</strain>
    </source>
</reference>
<keyword id="KW-0233">DNA recombination</keyword>
<keyword id="KW-0238">DNA-binding</keyword>
<keyword id="KW-0804">Transcription</keyword>
<keyword id="KW-0805">Transcription regulation</keyword>
<keyword id="KW-0810">Translation regulation</keyword>
<organism>
    <name type="scientific">Escherichia coli (strain K12 / MC4100 / BW2952)</name>
    <dbReference type="NCBI Taxonomy" id="595496"/>
    <lineage>
        <taxon>Bacteria</taxon>
        <taxon>Pseudomonadati</taxon>
        <taxon>Pseudomonadota</taxon>
        <taxon>Gammaproteobacteria</taxon>
        <taxon>Enterobacterales</taxon>
        <taxon>Enterobacteriaceae</taxon>
        <taxon>Escherichia</taxon>
    </lineage>
</organism>
<protein>
    <recommendedName>
        <fullName evidence="1">Integration host factor subunit beta</fullName>
        <shortName evidence="1">IHF-beta</shortName>
    </recommendedName>
</protein>
<comment type="function">
    <text evidence="1">This protein is one of the two subunits of integration host factor, a specific DNA-binding protein that functions in genetic recombination as well as in transcriptional and translational control.</text>
</comment>
<comment type="subunit">
    <text evidence="1">Heterodimer of an alpha and a beta chain.</text>
</comment>
<comment type="similarity">
    <text evidence="1">Belongs to the bacterial histone-like protein family.</text>
</comment>
<dbReference type="EMBL" id="CP001396">
    <property type="protein sequence ID" value="ACR63520.1"/>
    <property type="molecule type" value="Genomic_DNA"/>
</dbReference>
<dbReference type="RefSeq" id="WP_000167336.1">
    <property type="nucleotide sequence ID" value="NC_012759.1"/>
</dbReference>
<dbReference type="SMR" id="C4ZQ38"/>
<dbReference type="GeneID" id="93776505"/>
<dbReference type="KEGG" id="ebw:BWG_0764"/>
<dbReference type="HOGENOM" id="CLU_105066_2_0_6"/>
<dbReference type="GO" id="GO:0005694">
    <property type="term" value="C:chromosome"/>
    <property type="evidence" value="ECO:0007669"/>
    <property type="project" value="InterPro"/>
</dbReference>
<dbReference type="GO" id="GO:0005829">
    <property type="term" value="C:cytosol"/>
    <property type="evidence" value="ECO:0007669"/>
    <property type="project" value="TreeGrafter"/>
</dbReference>
<dbReference type="GO" id="GO:0003677">
    <property type="term" value="F:DNA binding"/>
    <property type="evidence" value="ECO:0007669"/>
    <property type="project" value="UniProtKB-UniRule"/>
</dbReference>
<dbReference type="GO" id="GO:0030527">
    <property type="term" value="F:structural constituent of chromatin"/>
    <property type="evidence" value="ECO:0007669"/>
    <property type="project" value="InterPro"/>
</dbReference>
<dbReference type="GO" id="GO:0006310">
    <property type="term" value="P:DNA recombination"/>
    <property type="evidence" value="ECO:0007669"/>
    <property type="project" value="UniProtKB-UniRule"/>
</dbReference>
<dbReference type="GO" id="GO:0006355">
    <property type="term" value="P:regulation of DNA-templated transcription"/>
    <property type="evidence" value="ECO:0007669"/>
    <property type="project" value="UniProtKB-UniRule"/>
</dbReference>
<dbReference type="GO" id="GO:0006417">
    <property type="term" value="P:regulation of translation"/>
    <property type="evidence" value="ECO:0007669"/>
    <property type="project" value="UniProtKB-UniRule"/>
</dbReference>
<dbReference type="CDD" id="cd13836">
    <property type="entry name" value="IHF_B"/>
    <property type="match status" value="1"/>
</dbReference>
<dbReference type="FunFam" id="4.10.520.10:FF:000003">
    <property type="entry name" value="Integration host factor subunit beta"/>
    <property type="match status" value="1"/>
</dbReference>
<dbReference type="Gene3D" id="4.10.520.10">
    <property type="entry name" value="IHF-like DNA-binding proteins"/>
    <property type="match status" value="1"/>
</dbReference>
<dbReference type="HAMAP" id="MF_00381">
    <property type="entry name" value="IHF_beta"/>
    <property type="match status" value="1"/>
</dbReference>
<dbReference type="InterPro" id="IPR000119">
    <property type="entry name" value="Hist_DNA-bd"/>
</dbReference>
<dbReference type="InterPro" id="IPR020816">
    <property type="entry name" value="Histone-like_DNA-bd_CS"/>
</dbReference>
<dbReference type="InterPro" id="IPR010992">
    <property type="entry name" value="IHF-like_DNA-bd_dom_sf"/>
</dbReference>
<dbReference type="InterPro" id="IPR005685">
    <property type="entry name" value="IHF_beta"/>
</dbReference>
<dbReference type="NCBIfam" id="TIGR00988">
    <property type="entry name" value="hip"/>
    <property type="match status" value="1"/>
</dbReference>
<dbReference type="NCBIfam" id="NF001222">
    <property type="entry name" value="PRK00199.1"/>
    <property type="match status" value="1"/>
</dbReference>
<dbReference type="PANTHER" id="PTHR33175">
    <property type="entry name" value="DNA-BINDING PROTEIN HU"/>
    <property type="match status" value="1"/>
</dbReference>
<dbReference type="PANTHER" id="PTHR33175:SF5">
    <property type="entry name" value="INTEGRATION HOST FACTOR SUBUNIT BETA"/>
    <property type="match status" value="1"/>
</dbReference>
<dbReference type="Pfam" id="PF00216">
    <property type="entry name" value="Bac_DNA_binding"/>
    <property type="match status" value="1"/>
</dbReference>
<dbReference type="PRINTS" id="PR01727">
    <property type="entry name" value="DNABINDINGHU"/>
</dbReference>
<dbReference type="SMART" id="SM00411">
    <property type="entry name" value="BHL"/>
    <property type="match status" value="1"/>
</dbReference>
<dbReference type="SUPFAM" id="SSF47729">
    <property type="entry name" value="IHF-like DNA-binding proteins"/>
    <property type="match status" value="1"/>
</dbReference>
<dbReference type="PROSITE" id="PS00045">
    <property type="entry name" value="HISTONE_LIKE"/>
    <property type="match status" value="1"/>
</dbReference>
<accession>C4ZQ38</accession>